<dbReference type="EMBL" id="L43967">
    <property type="protein sequence ID" value="AAC71520.1"/>
    <property type="molecule type" value="Genomic_DNA"/>
</dbReference>
<dbReference type="EMBL" id="U02177">
    <property type="protein sequence ID" value="AAD12461.1"/>
    <property type="molecule type" value="Genomic_DNA"/>
</dbReference>
<dbReference type="PIR" id="I64232">
    <property type="entry name" value="I64232"/>
</dbReference>
<dbReference type="RefSeq" id="WP_010869416.1">
    <property type="nucleotide sequence ID" value="NC_000908.2"/>
</dbReference>
<dbReference type="SMR" id="P47540"/>
<dbReference type="FunCoup" id="P47540">
    <property type="interactions" value="186"/>
</dbReference>
<dbReference type="STRING" id="243273.MG_298"/>
<dbReference type="GeneID" id="88282461"/>
<dbReference type="KEGG" id="mge:MG_298"/>
<dbReference type="eggNOG" id="COG1196">
    <property type="taxonomic scope" value="Bacteria"/>
</dbReference>
<dbReference type="HOGENOM" id="CLU_001042_2_2_14"/>
<dbReference type="InParanoid" id="P47540"/>
<dbReference type="OrthoDB" id="9808768at2"/>
<dbReference type="BioCyc" id="MGEN243273:G1GJ2-367-MONOMER"/>
<dbReference type="Proteomes" id="UP000000807">
    <property type="component" value="Chromosome"/>
</dbReference>
<dbReference type="GO" id="GO:0005694">
    <property type="term" value="C:chromosome"/>
    <property type="evidence" value="ECO:0007669"/>
    <property type="project" value="InterPro"/>
</dbReference>
<dbReference type="GO" id="GO:0005737">
    <property type="term" value="C:cytoplasm"/>
    <property type="evidence" value="ECO:0007669"/>
    <property type="project" value="UniProtKB-SubCell"/>
</dbReference>
<dbReference type="GO" id="GO:0005524">
    <property type="term" value="F:ATP binding"/>
    <property type="evidence" value="ECO:0007669"/>
    <property type="project" value="UniProtKB-UniRule"/>
</dbReference>
<dbReference type="GO" id="GO:0016887">
    <property type="term" value="F:ATP hydrolysis activity"/>
    <property type="evidence" value="ECO:0007669"/>
    <property type="project" value="InterPro"/>
</dbReference>
<dbReference type="GO" id="GO:0003677">
    <property type="term" value="F:DNA binding"/>
    <property type="evidence" value="ECO:0007669"/>
    <property type="project" value="UniProtKB-UniRule"/>
</dbReference>
<dbReference type="GO" id="GO:0030261">
    <property type="term" value="P:chromosome condensation"/>
    <property type="evidence" value="ECO:0007669"/>
    <property type="project" value="InterPro"/>
</dbReference>
<dbReference type="GO" id="GO:0007059">
    <property type="term" value="P:chromosome segregation"/>
    <property type="evidence" value="ECO:0007669"/>
    <property type="project" value="UniProtKB-UniRule"/>
</dbReference>
<dbReference type="GO" id="GO:0006260">
    <property type="term" value="P:DNA replication"/>
    <property type="evidence" value="ECO:0007669"/>
    <property type="project" value="UniProtKB-UniRule"/>
</dbReference>
<dbReference type="GO" id="GO:0007062">
    <property type="term" value="P:sister chromatid cohesion"/>
    <property type="evidence" value="ECO:0007669"/>
    <property type="project" value="InterPro"/>
</dbReference>
<dbReference type="Gene3D" id="1.20.1060.20">
    <property type="match status" value="1"/>
</dbReference>
<dbReference type="Gene3D" id="3.30.70.1620">
    <property type="match status" value="1"/>
</dbReference>
<dbReference type="Gene3D" id="3.40.50.300">
    <property type="entry name" value="P-loop containing nucleotide triphosphate hydrolases"/>
    <property type="match status" value="2"/>
</dbReference>
<dbReference type="HAMAP" id="MF_01894">
    <property type="entry name" value="Smc_prok"/>
    <property type="match status" value="1"/>
</dbReference>
<dbReference type="InterPro" id="IPR027417">
    <property type="entry name" value="P-loop_NTPase"/>
</dbReference>
<dbReference type="InterPro" id="IPR003395">
    <property type="entry name" value="RecF/RecN/SMC_N"/>
</dbReference>
<dbReference type="InterPro" id="IPR024704">
    <property type="entry name" value="SMC"/>
</dbReference>
<dbReference type="InterPro" id="IPR010935">
    <property type="entry name" value="SMC_hinge"/>
</dbReference>
<dbReference type="InterPro" id="IPR036277">
    <property type="entry name" value="SMC_hinge_sf"/>
</dbReference>
<dbReference type="InterPro" id="IPR011890">
    <property type="entry name" value="SMC_prok"/>
</dbReference>
<dbReference type="PANTHER" id="PTHR43977">
    <property type="entry name" value="STRUCTURAL MAINTENANCE OF CHROMOSOMES PROTEIN 3"/>
    <property type="match status" value="1"/>
</dbReference>
<dbReference type="Pfam" id="PF06470">
    <property type="entry name" value="SMC_hinge"/>
    <property type="match status" value="1"/>
</dbReference>
<dbReference type="Pfam" id="PF02463">
    <property type="entry name" value="SMC_N"/>
    <property type="match status" value="1"/>
</dbReference>
<dbReference type="PIRSF" id="PIRSF005719">
    <property type="entry name" value="SMC"/>
    <property type="match status" value="1"/>
</dbReference>
<dbReference type="SMART" id="SM00968">
    <property type="entry name" value="SMC_hinge"/>
    <property type="match status" value="1"/>
</dbReference>
<dbReference type="SUPFAM" id="SSF52540">
    <property type="entry name" value="P-loop containing nucleoside triphosphate hydrolases"/>
    <property type="match status" value="1"/>
</dbReference>
<dbReference type="SUPFAM" id="SSF75553">
    <property type="entry name" value="Smc hinge domain"/>
    <property type="match status" value="1"/>
</dbReference>
<proteinExistence type="inferred from homology"/>
<accession>P47540</accession>
<accession>Q49301</accession>
<name>SMC_MYCGE</name>
<comment type="function">
    <text evidence="1">Required for chromosome condensation and partitioning.</text>
</comment>
<comment type="subunit">
    <text evidence="1">Homodimer.</text>
</comment>
<comment type="subcellular location">
    <subcellularLocation>
        <location evidence="1">Cytoplasm</location>
    </subcellularLocation>
</comment>
<comment type="domain">
    <text evidence="1">Contains large globular domains required for ATP hydrolysis at each terminus and a third globular domain forming a flexible SMC hinge near the middle of the molecule. These domains are separated by coiled-coil structures.</text>
</comment>
<comment type="similarity">
    <text evidence="1">Belongs to the SMC family.</text>
</comment>
<protein>
    <recommendedName>
        <fullName evidence="1">Chromosome partition protein Smc</fullName>
    </recommendedName>
    <alternativeName>
        <fullName>Protein P115 homolog</fullName>
    </alternativeName>
</protein>
<feature type="chain" id="PRO_0000119025" description="Chromosome partition protein Smc">
    <location>
        <begin position="1"/>
        <end position="982"/>
    </location>
</feature>
<feature type="domain" description="SMC hinge">
    <location>
        <begin position="416"/>
        <end position="535"/>
    </location>
</feature>
<feature type="coiled-coil region" evidence="1">
    <location>
        <begin position="171"/>
        <end position="231"/>
    </location>
</feature>
<feature type="coiled-coil region" evidence="1">
    <location>
        <begin position="280"/>
        <end position="310"/>
    </location>
</feature>
<feature type="coiled-coil region" evidence="1">
    <location>
        <begin position="337"/>
        <end position="377"/>
    </location>
</feature>
<feature type="coiled-coil region" evidence="1">
    <location>
        <begin position="575"/>
        <end position="718"/>
    </location>
</feature>
<feature type="coiled-coil region" evidence="1">
    <location>
        <begin position="753"/>
        <end position="822"/>
    </location>
</feature>
<feature type="binding site" evidence="1">
    <location>
        <begin position="33"/>
        <end position="40"/>
    </location>
    <ligand>
        <name>ATP</name>
        <dbReference type="ChEBI" id="CHEBI:30616"/>
    </ligand>
</feature>
<feature type="sequence conflict" description="In Ref. 2; AAD12461." evidence="2" ref="2">
    <original>YVSENDSN</original>
    <variation>ICIWKWF</variation>
    <location>
        <begin position="975"/>
        <end position="982"/>
    </location>
</feature>
<organism>
    <name type="scientific">Mycoplasma genitalium (strain ATCC 33530 / DSM 19775 / NCTC 10195 / G37)</name>
    <name type="common">Mycoplasmoides genitalium</name>
    <dbReference type="NCBI Taxonomy" id="243273"/>
    <lineage>
        <taxon>Bacteria</taxon>
        <taxon>Bacillati</taxon>
        <taxon>Mycoplasmatota</taxon>
        <taxon>Mycoplasmoidales</taxon>
        <taxon>Mycoplasmoidaceae</taxon>
        <taxon>Mycoplasmoides</taxon>
    </lineage>
</organism>
<reference key="1">
    <citation type="journal article" date="1995" name="Science">
        <title>The minimal gene complement of Mycoplasma genitalium.</title>
        <authorList>
            <person name="Fraser C.M."/>
            <person name="Gocayne J.D."/>
            <person name="White O."/>
            <person name="Adams M.D."/>
            <person name="Clayton R.A."/>
            <person name="Fleischmann R.D."/>
            <person name="Bult C.J."/>
            <person name="Kerlavage A.R."/>
            <person name="Sutton G.G."/>
            <person name="Kelley J.M."/>
            <person name="Fritchman J.L."/>
            <person name="Weidman J.F."/>
            <person name="Small K.V."/>
            <person name="Sandusky M."/>
            <person name="Fuhrmann J.L."/>
            <person name="Nguyen D.T."/>
            <person name="Utterback T.R."/>
            <person name="Saudek D.M."/>
            <person name="Phillips C.A."/>
            <person name="Merrick J.M."/>
            <person name="Tomb J.-F."/>
            <person name="Dougherty B.A."/>
            <person name="Bott K.F."/>
            <person name="Hu P.-C."/>
            <person name="Lucier T.S."/>
            <person name="Peterson S.N."/>
            <person name="Smith H.O."/>
            <person name="Hutchison C.A. III"/>
            <person name="Venter J.C."/>
        </authorList>
    </citation>
    <scope>NUCLEOTIDE SEQUENCE [LARGE SCALE GENOMIC DNA]</scope>
    <source>
        <strain>ATCC 33530 / DSM 19775 / NCTC 10195 / G37</strain>
    </source>
</reference>
<reference key="2">
    <citation type="journal article" date="1993" name="J. Bacteriol.">
        <title>A survey of the Mycoplasma genitalium genome by using random sequencing.</title>
        <authorList>
            <person name="Peterson S.N."/>
            <person name="Hu P.-C."/>
            <person name="Bott K.F."/>
            <person name="Hutchison C.A. III"/>
        </authorList>
    </citation>
    <scope>NUCLEOTIDE SEQUENCE [GENOMIC DNA] OF 915-981</scope>
    <source>
        <strain>ATCC 33530 / DSM 19775 / NCTC 10195 / G37</strain>
    </source>
</reference>
<sequence>MVFLKRFRAYGFKSYADEITIDFTHSMTGIVGPNGSGKSNVVDALKWVLGERSMKHLRSKSGDDMIFFGSKDKPASKLAEIELTFDNSNRLLHDSRKEISVMRRVYRGSGQSEYFINSNPATLKEISGIFADIGLEKGSLGIISQGSVSWFVEAKPEERRKIFEDASGIGRYTKRKEEVVNQLNRTLINLKQVSVVLNELKKDLKKLTLQAEKAQQFIRVKNELKELELAVLVGEYLQAQTELDKFNFQINSSEHDFKIHEPQLELLEEQIVIFNSRFHSADMQSNELQKELQDIYQKINELEQRKVIIDVQLRQGFSQKDEKQKAAALKKLILVDQTQLDGFENQLSNSKTTITDLEKLINEQKSLVDQIKLQIEKNTADLIYQRSLKTIIELQTNELKKTNNANILVKNANALTGILNTLGTFLKFDKQYEKAILKALGKSIGYLVVNNNNAAIQAIDFLVKNEIGKVTFLPLDDVASDTKITNEHMEILKQLDGFLGVCSDHVKCDPLFQPVVNTLLAQVIIAKDLNSAINLSNYTYKLYRIVTLDGETVYAGGIINGGFEKTNLSDGYLSSASLDNEQNINKLENNERELKKELTELEVKLDEMNRKLKYEELLQAKFIERIVQIKKIILELKMEYEQLTNTTFDGKKAVASEAELIHSLNSAWAKRDEINSKLKLNQELKLQLAKTIKQSEEKIVDLRALLDEQRAKLVSAREGKIRFENTIQNITEKINSVYKMTMEFAIANHNKPVKLSSMQAHNKIAKLQNQLNEMGVINMESIAEISEKQKRFDDINAEYESAQQAVENLQKAITEIDEIASNEFDQLIQKLNQELPKTFKYLFGGGSCQIRYTDPSNVLVSGIDVFANPPGKNIANLMLLSGGEKTLVALSVLFSILKVSAFPLVILDEAESALDPANVERFANIIKTASKNTQFLIITHRQGTMMKCDMLLGAAMQTKGVTKTFAVELENAEKYVSENDSN</sequence>
<evidence type="ECO:0000255" key="1">
    <source>
        <dbReference type="HAMAP-Rule" id="MF_01894"/>
    </source>
</evidence>
<evidence type="ECO:0000305" key="2"/>
<gene>
    <name evidence="1" type="primary">smc</name>
    <name type="ordered locus">MG298</name>
</gene>
<keyword id="KW-0067">ATP-binding</keyword>
<keyword id="KW-0175">Coiled coil</keyword>
<keyword id="KW-0963">Cytoplasm</keyword>
<keyword id="KW-0238">DNA-binding</keyword>
<keyword id="KW-0547">Nucleotide-binding</keyword>
<keyword id="KW-1185">Reference proteome</keyword>